<proteinExistence type="inferred from homology"/>
<name>FPG_BRUAB</name>
<comment type="function">
    <text evidence="2">Involved in base excision repair of DNA damaged by oxidation or by mutagenic agents. Acts as a DNA glycosylase that recognizes and removes damaged bases. Has a preference for oxidized purines, such as 7,8-dihydro-8-oxoguanine (8-oxoG). Has AP (apurinic/apyrimidinic) lyase activity and introduces nicks in the DNA strand. Cleaves the DNA backbone by beta-delta elimination to generate a single-strand break at the site of the removed base with both 3'- and 5'-phosphates.</text>
</comment>
<comment type="catalytic activity">
    <reaction evidence="2">
        <text>Hydrolysis of DNA containing ring-opened 7-methylguanine residues, releasing 2,6-diamino-4-hydroxy-5-(N-methyl)formamidopyrimidine.</text>
        <dbReference type="EC" id="3.2.2.23"/>
    </reaction>
</comment>
<comment type="catalytic activity">
    <reaction evidence="2">
        <text>2'-deoxyribonucleotide-(2'-deoxyribose 5'-phosphate)-2'-deoxyribonucleotide-DNA = a 3'-end 2'-deoxyribonucleotide-(2,3-dehydro-2,3-deoxyribose 5'-phosphate)-DNA + a 5'-end 5'-phospho-2'-deoxyribonucleoside-DNA + H(+)</text>
        <dbReference type="Rhea" id="RHEA:66592"/>
        <dbReference type="Rhea" id="RHEA-COMP:13180"/>
        <dbReference type="Rhea" id="RHEA-COMP:16897"/>
        <dbReference type="Rhea" id="RHEA-COMP:17067"/>
        <dbReference type="ChEBI" id="CHEBI:15378"/>
        <dbReference type="ChEBI" id="CHEBI:136412"/>
        <dbReference type="ChEBI" id="CHEBI:157695"/>
        <dbReference type="ChEBI" id="CHEBI:167181"/>
        <dbReference type="EC" id="4.2.99.18"/>
    </reaction>
</comment>
<comment type="cofactor">
    <cofactor evidence="2">
        <name>Zn(2+)</name>
        <dbReference type="ChEBI" id="CHEBI:29105"/>
    </cofactor>
    <text evidence="2">Binds 1 zinc ion per subunit.</text>
</comment>
<comment type="subunit">
    <text evidence="2">Monomer.</text>
</comment>
<comment type="similarity">
    <text evidence="2">Belongs to the FPG family.</text>
</comment>
<feature type="initiator methionine" description="Removed" evidence="1">
    <location>
        <position position="1"/>
    </location>
</feature>
<feature type="chain" id="PRO_0000228419" description="Formamidopyrimidine-DNA glycosylase">
    <location>
        <begin position="2"/>
        <end position="293"/>
    </location>
</feature>
<feature type="zinc finger region" description="FPG-type" evidence="2">
    <location>
        <begin position="257"/>
        <end position="293"/>
    </location>
</feature>
<feature type="active site" description="Schiff-base intermediate with DNA" evidence="2">
    <location>
        <position position="2"/>
    </location>
</feature>
<feature type="active site" description="Proton donor" evidence="2">
    <location>
        <position position="3"/>
    </location>
</feature>
<feature type="active site" description="Proton donor; for beta-elimination activity" evidence="2">
    <location>
        <position position="58"/>
    </location>
</feature>
<feature type="active site" description="Proton donor; for delta-elimination activity" evidence="2">
    <location>
        <position position="283"/>
    </location>
</feature>
<feature type="binding site" evidence="2">
    <location>
        <position position="104"/>
    </location>
    <ligand>
        <name>DNA</name>
        <dbReference type="ChEBI" id="CHEBI:16991"/>
    </ligand>
</feature>
<feature type="binding site" evidence="2">
    <location>
        <position position="127"/>
    </location>
    <ligand>
        <name>DNA</name>
        <dbReference type="ChEBI" id="CHEBI:16991"/>
    </ligand>
</feature>
<feature type="binding site" evidence="2">
    <location>
        <position position="170"/>
    </location>
    <ligand>
        <name>DNA</name>
        <dbReference type="ChEBI" id="CHEBI:16991"/>
    </ligand>
</feature>
<dbReference type="EC" id="3.2.2.23" evidence="2"/>
<dbReference type="EC" id="4.2.99.18" evidence="2"/>
<dbReference type="EMBL" id="AE017223">
    <property type="protein sequence ID" value="AAX75451.1"/>
    <property type="molecule type" value="Genomic_DNA"/>
</dbReference>
<dbReference type="RefSeq" id="WP_002965245.1">
    <property type="nucleotide sequence ID" value="NC_006932.1"/>
</dbReference>
<dbReference type="SMR" id="Q57A83"/>
<dbReference type="EnsemblBacteria" id="AAX75451">
    <property type="protein sequence ID" value="AAX75451"/>
    <property type="gene ID" value="BruAb1_2156"/>
</dbReference>
<dbReference type="GeneID" id="93017516"/>
<dbReference type="KEGG" id="bmb:BruAb1_2156"/>
<dbReference type="HOGENOM" id="CLU_038423_1_1_5"/>
<dbReference type="PRO" id="PR:Q57A83"/>
<dbReference type="Proteomes" id="UP000000540">
    <property type="component" value="Chromosome I"/>
</dbReference>
<dbReference type="GO" id="GO:0034039">
    <property type="term" value="F:8-oxo-7,8-dihydroguanine DNA N-glycosylase activity"/>
    <property type="evidence" value="ECO:0007669"/>
    <property type="project" value="TreeGrafter"/>
</dbReference>
<dbReference type="GO" id="GO:0140078">
    <property type="term" value="F:class I DNA-(apurinic or apyrimidinic site) endonuclease activity"/>
    <property type="evidence" value="ECO:0007669"/>
    <property type="project" value="UniProtKB-EC"/>
</dbReference>
<dbReference type="GO" id="GO:0003684">
    <property type="term" value="F:damaged DNA binding"/>
    <property type="evidence" value="ECO:0007669"/>
    <property type="project" value="InterPro"/>
</dbReference>
<dbReference type="GO" id="GO:0008270">
    <property type="term" value="F:zinc ion binding"/>
    <property type="evidence" value="ECO:0007669"/>
    <property type="project" value="UniProtKB-UniRule"/>
</dbReference>
<dbReference type="GO" id="GO:0006284">
    <property type="term" value="P:base-excision repair"/>
    <property type="evidence" value="ECO:0007669"/>
    <property type="project" value="InterPro"/>
</dbReference>
<dbReference type="CDD" id="cd08966">
    <property type="entry name" value="EcFpg-like_N"/>
    <property type="match status" value="1"/>
</dbReference>
<dbReference type="FunFam" id="1.10.8.50:FF:000003">
    <property type="entry name" value="Formamidopyrimidine-DNA glycosylase"/>
    <property type="match status" value="1"/>
</dbReference>
<dbReference type="Gene3D" id="1.10.8.50">
    <property type="match status" value="1"/>
</dbReference>
<dbReference type="Gene3D" id="3.20.190.10">
    <property type="entry name" value="MutM-like, N-terminal"/>
    <property type="match status" value="1"/>
</dbReference>
<dbReference type="HAMAP" id="MF_00103">
    <property type="entry name" value="Fapy_DNA_glycosyl"/>
    <property type="match status" value="1"/>
</dbReference>
<dbReference type="InterPro" id="IPR015886">
    <property type="entry name" value="DNA_glyclase/AP_lyase_DNA-bd"/>
</dbReference>
<dbReference type="InterPro" id="IPR015887">
    <property type="entry name" value="DNA_glyclase_Znf_dom_DNA_BS"/>
</dbReference>
<dbReference type="InterPro" id="IPR020629">
    <property type="entry name" value="Formamido-pyr_DNA_Glyclase"/>
</dbReference>
<dbReference type="InterPro" id="IPR012319">
    <property type="entry name" value="FPG_cat"/>
</dbReference>
<dbReference type="InterPro" id="IPR035937">
    <property type="entry name" value="MutM-like_N-ter"/>
</dbReference>
<dbReference type="InterPro" id="IPR010979">
    <property type="entry name" value="Ribosomal_uS13-like_H2TH"/>
</dbReference>
<dbReference type="InterPro" id="IPR000214">
    <property type="entry name" value="Znf_DNA_glyclase/AP_lyase"/>
</dbReference>
<dbReference type="InterPro" id="IPR010663">
    <property type="entry name" value="Znf_FPG/IleRS"/>
</dbReference>
<dbReference type="NCBIfam" id="TIGR00577">
    <property type="entry name" value="fpg"/>
    <property type="match status" value="1"/>
</dbReference>
<dbReference type="NCBIfam" id="NF002211">
    <property type="entry name" value="PRK01103.1"/>
    <property type="match status" value="1"/>
</dbReference>
<dbReference type="PANTHER" id="PTHR22993">
    <property type="entry name" value="FORMAMIDOPYRIMIDINE-DNA GLYCOSYLASE"/>
    <property type="match status" value="1"/>
</dbReference>
<dbReference type="PANTHER" id="PTHR22993:SF9">
    <property type="entry name" value="FORMAMIDOPYRIMIDINE-DNA GLYCOSYLASE"/>
    <property type="match status" value="1"/>
</dbReference>
<dbReference type="Pfam" id="PF01149">
    <property type="entry name" value="Fapy_DNA_glyco"/>
    <property type="match status" value="1"/>
</dbReference>
<dbReference type="Pfam" id="PF06831">
    <property type="entry name" value="H2TH"/>
    <property type="match status" value="1"/>
</dbReference>
<dbReference type="Pfam" id="PF06827">
    <property type="entry name" value="zf-FPG_IleRS"/>
    <property type="match status" value="1"/>
</dbReference>
<dbReference type="SMART" id="SM00898">
    <property type="entry name" value="Fapy_DNA_glyco"/>
    <property type="match status" value="1"/>
</dbReference>
<dbReference type="SMART" id="SM01232">
    <property type="entry name" value="H2TH"/>
    <property type="match status" value="1"/>
</dbReference>
<dbReference type="SUPFAM" id="SSF57716">
    <property type="entry name" value="Glucocorticoid receptor-like (DNA-binding domain)"/>
    <property type="match status" value="1"/>
</dbReference>
<dbReference type="SUPFAM" id="SSF81624">
    <property type="entry name" value="N-terminal domain of MutM-like DNA repair proteins"/>
    <property type="match status" value="1"/>
</dbReference>
<dbReference type="SUPFAM" id="SSF46946">
    <property type="entry name" value="S13-like H2TH domain"/>
    <property type="match status" value="1"/>
</dbReference>
<dbReference type="PROSITE" id="PS51068">
    <property type="entry name" value="FPG_CAT"/>
    <property type="match status" value="1"/>
</dbReference>
<dbReference type="PROSITE" id="PS01242">
    <property type="entry name" value="ZF_FPG_1"/>
    <property type="match status" value="1"/>
</dbReference>
<dbReference type="PROSITE" id="PS51066">
    <property type="entry name" value="ZF_FPG_2"/>
    <property type="match status" value="1"/>
</dbReference>
<sequence length="293" mass="32006">MPELPEVETVRRGLQPFMEGATVVRVEQNRPDLRFAFPENFAERLSGRRIEALGRRAKYLTVHLDDGLSIISHLGMSGSFRIEAEDAQGLPGGFHHERSKNSLHDHVVFHLMRPDGASARIIYNDPRRFGFMLFAEKGALEEHPLLKDLGVEPTGNLLSGEVLAALFKGRRTPLKAALLDQRLIAGLGNIYVCEALWRPGLSPMRAAGSVAGEMDVMERLAGAIRSVIAQAIAAGGSSLKDYIQADGALGYFQHSFSVYGREGKPCRNPACGGTVERVVQSGRSTFFCASCQT</sequence>
<keyword id="KW-0227">DNA damage</keyword>
<keyword id="KW-0234">DNA repair</keyword>
<keyword id="KW-0238">DNA-binding</keyword>
<keyword id="KW-0326">Glycosidase</keyword>
<keyword id="KW-0378">Hydrolase</keyword>
<keyword id="KW-0456">Lyase</keyword>
<keyword id="KW-0479">Metal-binding</keyword>
<keyword id="KW-0511">Multifunctional enzyme</keyword>
<keyword id="KW-0862">Zinc</keyword>
<keyword id="KW-0863">Zinc-finger</keyword>
<accession>Q57A83</accession>
<gene>
    <name evidence="2" type="primary">mutM</name>
    <name evidence="2" type="synonym">fpg</name>
    <name type="ordered locus">BruAb1_2156</name>
</gene>
<reference key="1">
    <citation type="journal article" date="2005" name="J. Bacteriol.">
        <title>Completion of the genome sequence of Brucella abortus and comparison to the highly similar genomes of Brucella melitensis and Brucella suis.</title>
        <authorList>
            <person name="Halling S.M."/>
            <person name="Peterson-Burch B.D."/>
            <person name="Bricker B.J."/>
            <person name="Zuerner R.L."/>
            <person name="Qing Z."/>
            <person name="Li L.-L."/>
            <person name="Kapur V."/>
            <person name="Alt D.P."/>
            <person name="Olsen S.C."/>
        </authorList>
    </citation>
    <scope>NUCLEOTIDE SEQUENCE [LARGE SCALE GENOMIC DNA]</scope>
    <source>
        <strain>9-941</strain>
    </source>
</reference>
<evidence type="ECO:0000250" key="1"/>
<evidence type="ECO:0000255" key="2">
    <source>
        <dbReference type="HAMAP-Rule" id="MF_00103"/>
    </source>
</evidence>
<organism>
    <name type="scientific">Brucella abortus biovar 1 (strain 9-941)</name>
    <dbReference type="NCBI Taxonomy" id="262698"/>
    <lineage>
        <taxon>Bacteria</taxon>
        <taxon>Pseudomonadati</taxon>
        <taxon>Pseudomonadota</taxon>
        <taxon>Alphaproteobacteria</taxon>
        <taxon>Hyphomicrobiales</taxon>
        <taxon>Brucellaceae</taxon>
        <taxon>Brucella/Ochrobactrum group</taxon>
        <taxon>Brucella</taxon>
    </lineage>
</organism>
<protein>
    <recommendedName>
        <fullName evidence="2">Formamidopyrimidine-DNA glycosylase</fullName>
        <shortName evidence="2">Fapy-DNA glycosylase</shortName>
        <ecNumber evidence="2">3.2.2.23</ecNumber>
    </recommendedName>
    <alternativeName>
        <fullName evidence="2">DNA-(apurinic or apyrimidinic site) lyase MutM</fullName>
        <shortName evidence="2">AP lyase MutM</shortName>
        <ecNumber evidence="2">4.2.99.18</ecNumber>
    </alternativeName>
</protein>